<name>PRAF3_RAT</name>
<gene>
    <name type="primary">Arl6ip5</name>
    <name type="synonym">Gtrap3-18</name>
    <name type="synonym">Jwa</name>
    <name type="synonym">Pra2</name>
    <name type="synonym">Praf3</name>
</gene>
<keyword id="KW-0007">Acetylation</keyword>
<keyword id="KW-1003">Cell membrane</keyword>
<keyword id="KW-0963">Cytoplasm</keyword>
<keyword id="KW-0206">Cytoskeleton</keyword>
<keyword id="KW-0256">Endoplasmic reticulum</keyword>
<keyword id="KW-0472">Membrane</keyword>
<keyword id="KW-1185">Reference proteome</keyword>
<keyword id="KW-0812">Transmembrane</keyword>
<keyword id="KW-1133">Transmembrane helix</keyword>
<protein>
    <recommendedName>
        <fullName>PRA1 family protein 3</fullName>
    </recommendedName>
    <alternativeName>
        <fullName>ADP-ribosylation factor-like protein 6-interacting protein 5</fullName>
        <shortName>ARL-6-interacting protein 5</shortName>
        <shortName>Aip-5</shortName>
    </alternativeName>
    <alternativeName>
        <fullName>GTRAP3-18</fullName>
    </alternativeName>
    <alternativeName>
        <fullName>Glutamate transporter EAAC1-interacting protein</fullName>
    </alternativeName>
    <alternativeName>
        <fullName>Prenylated Rab acceptor protein 2</fullName>
    </alternativeName>
    <alternativeName>
        <fullName>Protein JWa</fullName>
    </alternativeName>
</protein>
<organism>
    <name type="scientific">Rattus norvegicus</name>
    <name type="common">Rat</name>
    <dbReference type="NCBI Taxonomy" id="10116"/>
    <lineage>
        <taxon>Eukaryota</taxon>
        <taxon>Metazoa</taxon>
        <taxon>Chordata</taxon>
        <taxon>Craniata</taxon>
        <taxon>Vertebrata</taxon>
        <taxon>Euteleostomi</taxon>
        <taxon>Mammalia</taxon>
        <taxon>Eutheria</taxon>
        <taxon>Euarchontoglires</taxon>
        <taxon>Glires</taxon>
        <taxon>Rodentia</taxon>
        <taxon>Myomorpha</taxon>
        <taxon>Muroidea</taxon>
        <taxon>Muridae</taxon>
        <taxon>Murinae</taxon>
        <taxon>Rattus</taxon>
    </lineage>
</organism>
<dbReference type="EMBL" id="AF240182">
    <property type="protein sequence ID" value="AAG28598.1"/>
    <property type="molecule type" value="mRNA"/>
</dbReference>
<dbReference type="EMBL" id="AF242391">
    <property type="protein sequence ID" value="AAF60354.1"/>
    <property type="molecule type" value="mRNA"/>
</dbReference>
<dbReference type="EMBL" id="BC061548">
    <property type="protein sequence ID" value="AAH61548.1"/>
    <property type="molecule type" value="mRNA"/>
</dbReference>
<dbReference type="RefSeq" id="NP_076462.1">
    <property type="nucleotide sequence ID" value="NM_023972.4"/>
</dbReference>
<dbReference type="RefSeq" id="XP_038964255.1">
    <property type="nucleotide sequence ID" value="XM_039108327.2"/>
</dbReference>
<dbReference type="RefSeq" id="XP_038964256.1">
    <property type="nucleotide sequence ID" value="XM_039108328.2"/>
</dbReference>
<dbReference type="RefSeq" id="XP_063142740.1">
    <property type="nucleotide sequence ID" value="XM_063286670.1"/>
</dbReference>
<dbReference type="RefSeq" id="XP_063142741.1">
    <property type="nucleotide sequence ID" value="XM_063286671.1"/>
</dbReference>
<dbReference type="SMR" id="Q9ES40"/>
<dbReference type="BioGRID" id="249355">
    <property type="interactions" value="1"/>
</dbReference>
<dbReference type="FunCoup" id="Q9ES40">
    <property type="interactions" value="2001"/>
</dbReference>
<dbReference type="IntAct" id="Q9ES40">
    <property type="interactions" value="1"/>
</dbReference>
<dbReference type="STRING" id="10116.ENSRNOP00000010185"/>
<dbReference type="iPTMnet" id="Q9ES40"/>
<dbReference type="PhosphoSitePlus" id="Q9ES40"/>
<dbReference type="SwissPalm" id="Q9ES40"/>
<dbReference type="jPOST" id="Q9ES40"/>
<dbReference type="PaxDb" id="10116-ENSRNOP00000010185"/>
<dbReference type="Ensembl" id="ENSRNOT00000010185.7">
    <property type="protein sequence ID" value="ENSRNOP00000010185.5"/>
    <property type="gene ID" value="ENSRNOG00000006818.7"/>
</dbReference>
<dbReference type="GeneID" id="66028"/>
<dbReference type="KEGG" id="rno:66028"/>
<dbReference type="UCSC" id="RGD:708572">
    <property type="organism name" value="rat"/>
</dbReference>
<dbReference type="AGR" id="RGD:708572"/>
<dbReference type="CTD" id="10550"/>
<dbReference type="RGD" id="708572">
    <property type="gene designation" value="Arl6ip5"/>
</dbReference>
<dbReference type="eggNOG" id="KOG4050">
    <property type="taxonomic scope" value="Eukaryota"/>
</dbReference>
<dbReference type="GeneTree" id="ENSGT00390000008631"/>
<dbReference type="HOGENOM" id="CLU_097683_0_0_1"/>
<dbReference type="InParanoid" id="Q9ES40"/>
<dbReference type="OMA" id="KPWDDFF"/>
<dbReference type="OrthoDB" id="39088at9989"/>
<dbReference type="PhylomeDB" id="Q9ES40"/>
<dbReference type="TreeFam" id="TF105479"/>
<dbReference type="Reactome" id="R-RNO-210500">
    <property type="pathway name" value="Glutamate Neurotransmitter Release Cycle"/>
</dbReference>
<dbReference type="PRO" id="PR:Q9ES40"/>
<dbReference type="Proteomes" id="UP000002494">
    <property type="component" value="Chromosome 4"/>
</dbReference>
<dbReference type="GO" id="GO:0005856">
    <property type="term" value="C:cytoskeleton"/>
    <property type="evidence" value="ECO:0007669"/>
    <property type="project" value="UniProtKB-SubCell"/>
</dbReference>
<dbReference type="GO" id="GO:0005789">
    <property type="term" value="C:endoplasmic reticulum membrane"/>
    <property type="evidence" value="ECO:0007669"/>
    <property type="project" value="UniProtKB-SubCell"/>
</dbReference>
<dbReference type="GO" id="GO:0016020">
    <property type="term" value="C:membrane"/>
    <property type="evidence" value="ECO:0000318"/>
    <property type="project" value="GO_Central"/>
</dbReference>
<dbReference type="GO" id="GO:0005886">
    <property type="term" value="C:plasma membrane"/>
    <property type="evidence" value="ECO:0000266"/>
    <property type="project" value="RGD"/>
</dbReference>
<dbReference type="GO" id="GO:0099523">
    <property type="term" value="C:presynaptic cytosol"/>
    <property type="evidence" value="ECO:0000266"/>
    <property type="project" value="RGD"/>
</dbReference>
<dbReference type="GO" id="GO:0044325">
    <property type="term" value="F:transmembrane transporter binding"/>
    <property type="evidence" value="ECO:0000314"/>
    <property type="project" value="RGD"/>
</dbReference>
<dbReference type="GO" id="GO:0034599">
    <property type="term" value="P:cellular response to oxidative stress"/>
    <property type="evidence" value="ECO:0000266"/>
    <property type="project" value="RGD"/>
</dbReference>
<dbReference type="GO" id="GO:0006749">
    <property type="term" value="P:glutathione metabolic process"/>
    <property type="evidence" value="ECO:0000266"/>
    <property type="project" value="RGD"/>
</dbReference>
<dbReference type="GO" id="GO:0008631">
    <property type="term" value="P:intrinsic apoptotic signaling pathway in response to oxidative stress"/>
    <property type="evidence" value="ECO:0000266"/>
    <property type="project" value="RGD"/>
</dbReference>
<dbReference type="GO" id="GO:0098712">
    <property type="term" value="P:L-glutamate import across plasma membrane"/>
    <property type="evidence" value="ECO:0000266"/>
    <property type="project" value="RGD"/>
</dbReference>
<dbReference type="GO" id="GO:0015813">
    <property type="term" value="P:L-glutamate transmembrane transport"/>
    <property type="evidence" value="ECO:0000266"/>
    <property type="project" value="RGD"/>
</dbReference>
<dbReference type="GO" id="GO:0007611">
    <property type="term" value="P:learning or memory"/>
    <property type="evidence" value="ECO:0000266"/>
    <property type="project" value="RGD"/>
</dbReference>
<dbReference type="GO" id="GO:0002037">
    <property type="term" value="P:negative regulation of L-glutamate import across plasma membrane"/>
    <property type="evidence" value="ECO:0000250"/>
    <property type="project" value="UniProtKB"/>
</dbReference>
<dbReference type="GO" id="GO:0010917">
    <property type="term" value="P:negative regulation of mitochondrial membrane potential"/>
    <property type="evidence" value="ECO:0000266"/>
    <property type="project" value="RGD"/>
</dbReference>
<dbReference type="GO" id="GO:0051051">
    <property type="term" value="P:negative regulation of transport"/>
    <property type="evidence" value="ECO:0000315"/>
    <property type="project" value="RGD"/>
</dbReference>
<dbReference type="GO" id="GO:0043065">
    <property type="term" value="P:positive regulation of apoptotic process"/>
    <property type="evidence" value="ECO:0000266"/>
    <property type="project" value="RGD"/>
</dbReference>
<dbReference type="GO" id="GO:0032874">
    <property type="term" value="P:positive regulation of stress-activated MAPK cascade"/>
    <property type="evidence" value="ECO:0000266"/>
    <property type="project" value="RGD"/>
</dbReference>
<dbReference type="GO" id="GO:0072659">
    <property type="term" value="P:protein localization to plasma membrane"/>
    <property type="evidence" value="ECO:0000266"/>
    <property type="project" value="RGD"/>
</dbReference>
<dbReference type="GO" id="GO:0015031">
    <property type="term" value="P:protein transport"/>
    <property type="evidence" value="ECO:0000266"/>
    <property type="project" value="RGD"/>
</dbReference>
<dbReference type="GO" id="GO:0051580">
    <property type="term" value="P:regulation of neurotransmitter uptake"/>
    <property type="evidence" value="ECO:0000314"/>
    <property type="project" value="SynGO"/>
</dbReference>
<dbReference type="InterPro" id="IPR004895">
    <property type="entry name" value="Prenylated_rab_accept_PRA1"/>
</dbReference>
<dbReference type="PANTHER" id="PTHR12859:SF2">
    <property type="entry name" value="PRA1 FAMILY PROTEIN 3"/>
    <property type="match status" value="1"/>
</dbReference>
<dbReference type="PANTHER" id="PTHR12859">
    <property type="entry name" value="PRA1 PROTEIN"/>
    <property type="match status" value="1"/>
</dbReference>
<dbReference type="Pfam" id="PF03208">
    <property type="entry name" value="PRA1"/>
    <property type="match status" value="1"/>
</dbReference>
<accession>Q9ES40</accession>
<accession>Q9JKD1</accession>
<proteinExistence type="evidence at protein level"/>
<comment type="function">
    <text evidence="6 7 8 9">Regulates intracellular concentrations of taurine and glutamate (Ref.5). Negatively modulates SLC1A1/EAAC1 glutamate transport activity by decreasing its affinity for glutamate in a PKC activity-dependent manner (PubMed:11242046). Plays a role in the retention of SLC1A1/EAAC1 in the endoplasmic reticulum (PubMed:19720795).</text>
</comment>
<comment type="subunit">
    <text evidence="3 5 6 7">Homodimer. Heterodimer with ARL6IP1 (By similarity). Forms multimers (PubMed:11242046). Interacts with ARL6 (By similarity). Interacts with prenylated RAB1A and RAB3A (PubMed:11096102). Interacts with SLC1A1/EAAC1 (PubMed:11242046). Interacts with RTN2 (via first transmembrane domain) (PubMed:19720795). Does not interact with VAMP1, VAMP2 or VAMP3 (PubMed:11096102).</text>
</comment>
<comment type="subcellular location">
    <subcellularLocation>
        <location evidence="5">Endoplasmic reticulum membrane</location>
        <topology evidence="4">Multi-pass membrane protein</topology>
    </subcellularLocation>
    <subcellularLocation>
        <location evidence="6">Cell membrane</location>
        <topology evidence="4">Multi-pass membrane protein</topology>
    </subcellularLocation>
    <subcellularLocation>
        <location evidence="6">Cytoplasm</location>
    </subcellularLocation>
    <subcellularLocation>
        <location evidence="8">Cytoplasm</location>
        <location evidence="8">Cytoskeleton</location>
    </subcellularLocation>
    <text evidence="6 8">Also exists as a soluble form in the cytoplasm (PubMed:11242046). Associated with microtubules (Ref.5).</text>
</comment>
<comment type="tissue specificity">
    <text evidence="5 7">Ubiquitous (PubMed:11096102). Most abundant in heart and brain (PubMed:11096102). In the embryonic brain cortex, expressed in neurons and astrocytes (PubMed:19720795).</text>
</comment>
<comment type="induction">
    <text evidence="1">By methyl-beta-cyclodextrin.</text>
</comment>
<comment type="similarity">
    <text evidence="10">Belongs to the PRA1 family.</text>
</comment>
<feature type="chain" id="PRO_0000220885" description="PRA1 family protein 3">
    <location>
        <begin position="1"/>
        <end position="188"/>
    </location>
</feature>
<feature type="topological domain" description="Cytoplasmic" evidence="1">
    <location>
        <begin position="1"/>
        <end position="35"/>
    </location>
</feature>
<feature type="transmembrane region" description="Helical" evidence="4">
    <location>
        <begin position="36"/>
        <end position="56"/>
    </location>
</feature>
<feature type="transmembrane region" description="Helical" evidence="4">
    <location>
        <begin position="57"/>
        <end position="77"/>
    </location>
</feature>
<feature type="topological domain" description="Cytoplasmic" evidence="1">
    <location>
        <begin position="78"/>
        <end position="92"/>
    </location>
</feature>
<feature type="transmembrane region" description="Helical" evidence="4">
    <location>
        <begin position="93"/>
        <end position="113"/>
    </location>
</feature>
<feature type="transmembrane region" description="Helical" evidence="4">
    <location>
        <begin position="115"/>
        <end position="135"/>
    </location>
</feature>
<feature type="topological domain" description="Cytoplasmic" evidence="1">
    <location>
        <begin position="136"/>
        <end position="188"/>
    </location>
</feature>
<feature type="region of interest" description="Required for homodimer formation and heterodimer formation with ARL6IP1" evidence="3">
    <location>
        <begin position="103"/>
        <end position="117"/>
    </location>
</feature>
<feature type="region of interest" description="Targeting to endoplasmic reticulum membrane" evidence="5">
    <location>
        <begin position="136"/>
        <end position="188"/>
    </location>
</feature>
<feature type="modified residue" description="N-acetylmethionine" evidence="2">
    <location>
        <position position="1"/>
    </location>
</feature>
<feature type="mutagenesis site" description="Partial relocalization to Golgi membranes." evidence="5">
    <original>RLRNLKNKLENK</original>
    <variation>ELENLENELENE</variation>
    <location>
        <begin position="140"/>
        <end position="151"/>
    </location>
</feature>
<feature type="mutagenesis site" description="No effect." evidence="5">
    <original>RLRNLKNK</original>
    <variation>ALANLANA</variation>
    <location>
        <begin position="140"/>
        <end position="147"/>
    </location>
</feature>
<feature type="mutagenesis site" description="Partial relocalization to Golgi membranes." evidence="5">
    <original>K</original>
    <variation>A</variation>
    <location>
        <position position="185"/>
    </location>
</feature>
<feature type="mutagenesis site" description="Partial relocalization to Golgi membranes." evidence="5">
    <original>R</original>
    <variation>A</variation>
    <location>
        <position position="187"/>
    </location>
</feature>
<feature type="sequence conflict" description="In Ref. 3; AAF60354." evidence="10" ref="3">
    <original>L</original>
    <variation>I</variation>
    <location>
        <position position="5"/>
    </location>
</feature>
<feature type="sequence conflict" description="In Ref. 3; AAF60354." evidence="10" ref="3">
    <original>N</original>
    <variation>D</variation>
    <location>
        <position position="34"/>
    </location>
</feature>
<feature type="sequence conflict" description="In Ref. 3; AAF60354." evidence="10" ref="3">
    <original>V</original>
    <variation>I</variation>
    <location>
        <position position="57"/>
    </location>
</feature>
<feature type="sequence conflict" description="In Ref. 3; AAF60354." evidence="10" ref="3">
    <original>I</original>
    <variation>V</variation>
    <location>
        <position position="72"/>
    </location>
</feature>
<feature type="sequence conflict" description="In Ref. 3; AAF60354." evidence="10" ref="3">
    <original>I</original>
    <variation>V</variation>
    <location>
        <position position="89"/>
    </location>
</feature>
<feature type="sequence conflict" description="In Ref. 3; AAF60354." evidence="10" ref="3">
    <original>Q</original>
    <variation>R</variation>
    <location>
        <position position="96"/>
    </location>
</feature>
<feature type="sequence conflict" description="In Ref. 3; AAF60354." evidence="10" ref="3">
    <original>A</original>
    <variation>T</variation>
    <location>
        <position position="100"/>
    </location>
</feature>
<feature type="sequence conflict" description="In Ref. 3; AAF60354." evidence="10" ref="3">
    <original>K</original>
    <variation>Q</variation>
    <location>
        <position position="147"/>
    </location>
</feature>
<feature type="sequence conflict" description="In Ref. 3; AAF60354." evidence="10" ref="3">
    <original>K</original>
    <variation>R</variation>
    <location>
        <position position="159"/>
    </location>
</feature>
<feature type="sequence conflict" description="In Ref. 3; AAF60354." evidence="10" ref="3">
    <original>I</original>
    <variation>V</variation>
    <location>
        <position position="165"/>
    </location>
</feature>
<feature type="sequence conflict" description="In Ref. 3; AAF60354." evidence="10" ref="3">
    <original>DSINKFADY</original>
    <variation>EGINRLTGC</variation>
    <location>
        <begin position="174"/>
        <end position="182"/>
    </location>
</feature>
<feature type="sequence conflict" description="In Ref. 3; AAF60354." evidence="10" ref="3">
    <original>AR</original>
    <variation>VK</variation>
    <location>
        <begin position="186"/>
        <end position="187"/>
    </location>
</feature>
<sequence>MDVNLAPLRAWDDFFPGSDRFARPDFRDISKWNNRVVSNLLYYQTNYLVVAAMMISVVGFLSPFNMILGGIIVVLVFTGFVWAAHNKDILRRMKKQYPTAFVMVVMLASYFLISMFGGVMVFVFGITFPLLLMFIHASLRLRNLKNKLENKMEGIGLKKTPMGIILDALEQQEDSINKFADYISKARE</sequence>
<reference key="1">
    <citation type="journal article" date="2001" name="J. Biol. Chem.">
        <title>PRA isoforms are targeted to distinct membrane compartments.</title>
        <authorList>
            <person name="Abdul-Ghani M."/>
            <person name="Gougeon P.-Y."/>
            <person name="Prosser D.C."/>
            <person name="Da-Silva L.F."/>
            <person name="Ngsee J.K."/>
        </authorList>
    </citation>
    <scope>NUCLEOTIDE SEQUENCE [MRNA]</scope>
    <scope>FUNCTION</scope>
    <scope>INTERACTION WITH RAB1A AND RAB3A</scope>
    <scope>LACK OF INTERACTION WITH VAMP1; VAMP2 AND VAMP3</scope>
    <scope>TISSUE SPECIFICITY</scope>
    <scope>SUBCELLULAR LOCATION</scope>
    <scope>MUTAGENESIS OF 140-ARG--LYS-147; 140-ARG--LYS-151; LYS-185 AND ARG-187</scope>
    <source>
        <tissue>Brain</tissue>
    </source>
</reference>
<reference key="2">
    <citation type="journal article" date="2001" name="Nature">
        <title>Modulation of the neuronal glutamate transporter EAAC1 by the interacting protein GTRAP3-18.</title>
        <authorList>
            <person name="Lin C.-L.G."/>
            <person name="Orlov I."/>
            <person name="Ruggiero A.M."/>
            <person name="Dykes-Hoberg M."/>
            <person name="Lee A."/>
            <person name="Jackson M."/>
            <person name="Rothstein J.D."/>
        </authorList>
    </citation>
    <scope>NUCLEOTIDE SEQUENCE [MRNA]</scope>
    <scope>INTERACTION WITH SLC1A1</scope>
    <scope>FUNCTION</scope>
    <scope>SUBCELLULAR LOCATION</scope>
    <scope>SUBUNIT</scope>
    <source>
        <strain>Sprague-Dawley</strain>
        <tissue>Brain</tissue>
    </source>
</reference>
<reference key="3">
    <citation type="submission" date="2000-03" db="EMBL/GenBank/DDBJ databases">
        <title>JWA and its role in the regulation of cell differentiation.</title>
        <authorList>
            <person name="Xia W."/>
            <person name="Ye J."/>
            <person name="Cao H.X."/>
            <person name="Chen J.F."/>
            <person name="Zhang Z.D."/>
            <person name="Zhao H."/>
            <person name="Shen Q."/>
            <person name="Lu H."/>
            <person name="Sheng R.L."/>
            <person name="Wang C.Y."/>
            <person name="Xu X.K."/>
            <person name="Wang X.R."/>
            <person name="Zhou J.W."/>
        </authorList>
    </citation>
    <scope>NUCLEOTIDE SEQUENCE [MRNA]</scope>
    <source>
        <strain>Sprague-Dawley</strain>
    </source>
</reference>
<reference key="4">
    <citation type="journal article" date="2004" name="Genome Res.">
        <title>The status, quality, and expansion of the NIH full-length cDNA project: the Mammalian Gene Collection (MGC).</title>
        <authorList>
            <consortium name="The MGC Project Team"/>
        </authorList>
    </citation>
    <scope>NUCLEOTIDE SEQUENCE [LARGE SCALE MRNA]</scope>
    <source>
        <tissue>Pituitary</tissue>
    </source>
</reference>
<reference key="5">
    <citation type="journal article" date="2003" name="Chin. Sci. Bull.">
        <title>JWA, a novel microtubule-associated protein, regulates homeostasis of intracellular amino acids in PC12 cells.</title>
        <authorList>
            <person name="Li A.Q."/>
            <person name="Li A.P."/>
            <person name="Mao W.G."/>
            <person name="Chen H."/>
            <person name="Huang S."/>
            <person name="Qi H."/>
            <person name="Ye J."/>
            <person name="Zhang Z.D."/>
            <person name="Wang X.R."/>
            <person name="Sun F."/>
            <person name="Zou C."/>
            <person name="Zhou J.W."/>
        </authorList>
    </citation>
    <scope>SUBCELLULAR LOCATION</scope>
    <scope>FUNCTION</scope>
</reference>
<reference key="6">
    <citation type="journal article" date="2009" name="Diabetes">
        <title>Functional role of neuroendocrine-specific protein-like 1 in membrane translocation of GLUT4.</title>
        <authorList>
            <person name="Ikemoto T."/>
            <person name="Hosoya T."/>
            <person name="Takata K."/>
            <person name="Aoyama H."/>
            <person name="Hiramatsu T."/>
            <person name="Onoe H."/>
            <person name="Suzuki M."/>
            <person name="Endo M."/>
        </authorList>
    </citation>
    <scope>FUNCTION</scope>
    <scope>INTERACTION WITH RTN2</scope>
    <scope>TISSUE SPECIFICITY</scope>
</reference>
<evidence type="ECO:0000250" key="1"/>
<evidence type="ECO:0000250" key="2">
    <source>
        <dbReference type="UniProtKB" id="O75915"/>
    </source>
</evidence>
<evidence type="ECO:0000250" key="3">
    <source>
        <dbReference type="UniProtKB" id="Q8R5J9"/>
    </source>
</evidence>
<evidence type="ECO:0000255" key="4"/>
<evidence type="ECO:0000269" key="5">
    <source>
    </source>
</evidence>
<evidence type="ECO:0000269" key="6">
    <source>
    </source>
</evidence>
<evidence type="ECO:0000269" key="7">
    <source>
    </source>
</evidence>
<evidence type="ECO:0000269" key="8">
    <source ref="5"/>
</evidence>
<evidence type="ECO:0000303" key="9">
    <source>
    </source>
</evidence>
<evidence type="ECO:0000305" key="10"/>